<comment type="function">
    <text evidence="1">Cell surface protein involved in cell-cell-interactions via its interactions with neurexin family members. Plays a role in synapse function and synaptic signal transmission, and probably mediates its effects by recruiting and clustering other synaptic proteins. May promote the initial formation of synapses, but is not essential for this. May also play a role in glia-glia or glia-neuron interactions in the developing peripheral nervous system (By similarity).</text>
</comment>
<comment type="subunit">
    <text evidence="1 2">Homodimer, and heterodimer with NLGN1 and NLGN2 (By similarity). Interacts with neurexins NRXN1, NRXN2 and NRXN3. Interaction with neurexins is mediated by heparan sulfate glycan modification on neurexin (By similarity). Interacts (via its C-terminus) with DLG4/PSD-95 (via PDZ domain 3) (By similarity).</text>
</comment>
<comment type="subcellular location">
    <subcellularLocation>
        <location evidence="1">Cell membrane</location>
        <topology evidence="1">Single-pass type I membrane protein</topology>
    </subcellularLocation>
    <subcellularLocation>
        <location evidence="1">Synapse</location>
    </subcellularLocation>
    <text evidence="1">Detected at both glutamatergic and GABAergic synapses.</text>
</comment>
<comment type="similarity">
    <text evidence="5">Belongs to the type-B carboxylesterase/lipase family.</text>
</comment>
<accession>Q8WMH2</accession>
<name>NLGN3_MACMU</name>
<reference key="1">
    <citation type="submission" date="2001-09" db="EMBL/GenBank/DDBJ databases">
        <authorList>
            <person name="Mungenast A.E."/>
            <person name="Ojeda S.R."/>
        </authorList>
    </citation>
    <scope>NUCLEOTIDE SEQUENCE [MRNA]</scope>
    <source>
        <tissue>Hypothalamus</tissue>
    </source>
</reference>
<protein>
    <recommendedName>
        <fullName>Neuroligin-3</fullName>
    </recommendedName>
    <alternativeName>
        <fullName>Gliotactin homolog</fullName>
    </alternativeName>
</protein>
<dbReference type="EMBL" id="AF424850">
    <property type="protein sequence ID" value="AAL40263.1"/>
    <property type="molecule type" value="mRNA"/>
</dbReference>
<dbReference type="SMR" id="Q8WMH2"/>
<dbReference type="STRING" id="9544.ENSMMUP00000045329"/>
<dbReference type="ESTHER" id="macmu-3neur">
    <property type="family name" value="Neuroligin"/>
</dbReference>
<dbReference type="MEROPS" id="S09.963"/>
<dbReference type="GlyCosmos" id="Q8WMH2">
    <property type="glycosylation" value="1 site, No reported glycans"/>
</dbReference>
<dbReference type="PaxDb" id="9544-ENSMMUP00000023407"/>
<dbReference type="eggNOG" id="KOG1516">
    <property type="taxonomic scope" value="Eukaryota"/>
</dbReference>
<dbReference type="HOGENOM" id="CLU_1363181_0_0_1"/>
<dbReference type="InParanoid" id="Q8WMH2"/>
<dbReference type="Proteomes" id="UP000006718">
    <property type="component" value="Unassembled WGS sequence"/>
</dbReference>
<dbReference type="GO" id="GO:0098984">
    <property type="term" value="C:neuron to neuron synapse"/>
    <property type="evidence" value="ECO:0007669"/>
    <property type="project" value="UniProtKB-ARBA"/>
</dbReference>
<dbReference type="GO" id="GO:0005886">
    <property type="term" value="C:plasma membrane"/>
    <property type="evidence" value="ECO:0007669"/>
    <property type="project" value="UniProtKB-SubCell"/>
</dbReference>
<dbReference type="GO" id="GO:0042043">
    <property type="term" value="F:neurexin family protein binding"/>
    <property type="evidence" value="ECO:0007669"/>
    <property type="project" value="InterPro"/>
</dbReference>
<dbReference type="GO" id="GO:0007155">
    <property type="term" value="P:cell adhesion"/>
    <property type="evidence" value="ECO:0007669"/>
    <property type="project" value="UniProtKB-KW"/>
</dbReference>
<dbReference type="GO" id="GO:0099054">
    <property type="term" value="P:presynapse assembly"/>
    <property type="evidence" value="ECO:0007669"/>
    <property type="project" value="UniProtKB-ARBA"/>
</dbReference>
<dbReference type="Gene3D" id="3.40.50.1820">
    <property type="entry name" value="alpha/beta hydrolase"/>
    <property type="match status" value="1"/>
</dbReference>
<dbReference type="InterPro" id="IPR029058">
    <property type="entry name" value="AB_hydrolase_fold"/>
</dbReference>
<dbReference type="InterPro" id="IPR002018">
    <property type="entry name" value="CarbesteraseB"/>
</dbReference>
<dbReference type="InterPro" id="IPR051093">
    <property type="entry name" value="Neuroligin/BSAL"/>
</dbReference>
<dbReference type="InterPro" id="IPR000460">
    <property type="entry name" value="Nlgn"/>
</dbReference>
<dbReference type="PANTHER" id="PTHR43903">
    <property type="entry name" value="NEUROLIGIN"/>
    <property type="match status" value="1"/>
</dbReference>
<dbReference type="Pfam" id="PF00135">
    <property type="entry name" value="COesterase"/>
    <property type="match status" value="1"/>
</dbReference>
<dbReference type="PRINTS" id="PR01090">
    <property type="entry name" value="NEUROLIGIN"/>
</dbReference>
<dbReference type="SUPFAM" id="SSF53474">
    <property type="entry name" value="alpha/beta-Hydrolases"/>
    <property type="match status" value="1"/>
</dbReference>
<evidence type="ECO:0000250" key="1"/>
<evidence type="ECO:0000250" key="2">
    <source>
        <dbReference type="UniProtKB" id="Q8BYM5"/>
    </source>
</evidence>
<evidence type="ECO:0000255" key="3"/>
<evidence type="ECO:0000256" key="4">
    <source>
        <dbReference type="SAM" id="MobiDB-lite"/>
    </source>
</evidence>
<evidence type="ECO:0000305" key="5"/>
<organism>
    <name type="scientific">Macaca mulatta</name>
    <name type="common">Rhesus macaque</name>
    <dbReference type="NCBI Taxonomy" id="9544"/>
    <lineage>
        <taxon>Eukaryota</taxon>
        <taxon>Metazoa</taxon>
        <taxon>Chordata</taxon>
        <taxon>Craniata</taxon>
        <taxon>Vertebrata</taxon>
        <taxon>Euteleostomi</taxon>
        <taxon>Mammalia</taxon>
        <taxon>Eutheria</taxon>
        <taxon>Euarchontoglires</taxon>
        <taxon>Primates</taxon>
        <taxon>Haplorrhini</taxon>
        <taxon>Catarrhini</taxon>
        <taxon>Cercopithecidae</taxon>
        <taxon>Cercopithecinae</taxon>
        <taxon>Macaca</taxon>
    </lineage>
</organism>
<gene>
    <name type="primary">NLGN3</name>
</gene>
<sequence length="202" mass="22897">RYGSPTYFYAFYHHCQSLMKPAWSDAAHGDEVPYVFGVPMVGPTDLFPCNFSKNDVMLSAVVMTYWTNFAKTGDPNKPVPQDTKFIHTKANRFEEVAWSKYNPRDQLYLHIGLKPRVRDHYRATKVAFWKHLVPHLYNLHDMFHYTSTTTKVPLRIPPTAPTSPAGPMARPGAPSGQPSHLPTATRMPRGPGTGTRMQGHSW</sequence>
<feature type="chain" id="PRO_0000070298" description="Neuroligin-3">
    <location>
        <begin position="1" status="less than"/>
        <end position="202" status="greater than"/>
    </location>
</feature>
<feature type="topological domain" description="Extracellular" evidence="3">
    <location>
        <begin position="1" status="less than"/>
        <end position="202" status="greater than"/>
    </location>
</feature>
<feature type="region of interest" description="Disordered" evidence="4">
    <location>
        <begin position="154"/>
        <end position="202"/>
    </location>
</feature>
<feature type="glycosylation site" description="N-linked (GlcNAc...) asparagine" evidence="3">
    <location>
        <position position="50"/>
    </location>
</feature>
<feature type="disulfide bond" evidence="1">
    <location>
        <begin position="15"/>
        <end position="49"/>
    </location>
</feature>
<feature type="non-terminal residue">
    <location>
        <position position="1"/>
    </location>
</feature>
<feature type="non-terminal residue">
    <location>
        <position position="202"/>
    </location>
</feature>
<keyword id="KW-0130">Cell adhesion</keyword>
<keyword id="KW-1003">Cell membrane</keyword>
<keyword id="KW-1015">Disulfide bond</keyword>
<keyword id="KW-0325">Glycoprotein</keyword>
<keyword id="KW-0472">Membrane</keyword>
<keyword id="KW-1185">Reference proteome</keyword>
<keyword id="KW-0770">Synapse</keyword>
<proteinExistence type="evidence at transcript level"/>